<evidence type="ECO:0000255" key="1">
    <source>
        <dbReference type="HAMAP-Rule" id="MF_00600"/>
    </source>
</evidence>
<evidence type="ECO:0000256" key="2">
    <source>
        <dbReference type="SAM" id="MobiDB-lite"/>
    </source>
</evidence>
<evidence type="ECO:0000269" key="3">
    <source>
    </source>
</evidence>
<evidence type="ECO:0007829" key="4">
    <source>
        <dbReference type="PDB" id="1IOK"/>
    </source>
</evidence>
<gene>
    <name evidence="1" type="primary">groEL</name>
    <name evidence="1" type="synonym">groL</name>
    <name type="synonym">mopA</name>
</gene>
<proteinExistence type="evidence at protein level"/>
<name>CH60_PARDE</name>
<dbReference type="EC" id="5.6.1.7" evidence="1"/>
<dbReference type="EMBL" id="AB015985">
    <property type="protein sequence ID" value="BAA36516.2"/>
    <property type="molecule type" value="Genomic_DNA"/>
</dbReference>
<dbReference type="RefSeq" id="WP_011749890.1">
    <property type="nucleotide sequence ID" value="NZ_PPGA01000014.1"/>
</dbReference>
<dbReference type="PDB" id="1IOK">
    <property type="method" value="X-ray"/>
    <property type="resolution" value="3.20 A"/>
    <property type="chains" value="A/B/C/D/E/F/G=1-545"/>
</dbReference>
<dbReference type="PDBsum" id="1IOK"/>
<dbReference type="SMR" id="Q9Z462"/>
<dbReference type="GeneID" id="93454613"/>
<dbReference type="OMA" id="TDTDKME"/>
<dbReference type="EvolutionaryTrace" id="Q9Z462"/>
<dbReference type="GO" id="GO:0005737">
    <property type="term" value="C:cytoplasm"/>
    <property type="evidence" value="ECO:0007669"/>
    <property type="project" value="UniProtKB-SubCell"/>
</dbReference>
<dbReference type="GO" id="GO:0005524">
    <property type="term" value="F:ATP binding"/>
    <property type="evidence" value="ECO:0007669"/>
    <property type="project" value="UniProtKB-UniRule"/>
</dbReference>
<dbReference type="GO" id="GO:0140662">
    <property type="term" value="F:ATP-dependent protein folding chaperone"/>
    <property type="evidence" value="ECO:0007669"/>
    <property type="project" value="InterPro"/>
</dbReference>
<dbReference type="GO" id="GO:0016853">
    <property type="term" value="F:isomerase activity"/>
    <property type="evidence" value="ECO:0007669"/>
    <property type="project" value="UniProtKB-KW"/>
</dbReference>
<dbReference type="GO" id="GO:0051082">
    <property type="term" value="F:unfolded protein binding"/>
    <property type="evidence" value="ECO:0007669"/>
    <property type="project" value="UniProtKB-UniRule"/>
</dbReference>
<dbReference type="GO" id="GO:0042026">
    <property type="term" value="P:protein refolding"/>
    <property type="evidence" value="ECO:0007669"/>
    <property type="project" value="UniProtKB-UniRule"/>
</dbReference>
<dbReference type="CDD" id="cd03344">
    <property type="entry name" value="GroEL"/>
    <property type="match status" value="1"/>
</dbReference>
<dbReference type="FunFam" id="1.10.560.10:FF:000001">
    <property type="entry name" value="60 kDa chaperonin"/>
    <property type="match status" value="1"/>
</dbReference>
<dbReference type="FunFam" id="3.50.7.10:FF:000001">
    <property type="entry name" value="60 kDa chaperonin"/>
    <property type="match status" value="1"/>
</dbReference>
<dbReference type="Gene3D" id="3.50.7.10">
    <property type="entry name" value="GroEL"/>
    <property type="match status" value="1"/>
</dbReference>
<dbReference type="Gene3D" id="1.10.560.10">
    <property type="entry name" value="GroEL-like equatorial domain"/>
    <property type="match status" value="1"/>
</dbReference>
<dbReference type="Gene3D" id="3.30.260.10">
    <property type="entry name" value="TCP-1-like chaperonin intermediate domain"/>
    <property type="match status" value="1"/>
</dbReference>
<dbReference type="HAMAP" id="MF_00600">
    <property type="entry name" value="CH60"/>
    <property type="match status" value="1"/>
</dbReference>
<dbReference type="InterPro" id="IPR018370">
    <property type="entry name" value="Chaperonin_Cpn60_CS"/>
</dbReference>
<dbReference type="InterPro" id="IPR001844">
    <property type="entry name" value="Cpn60/GroEL"/>
</dbReference>
<dbReference type="InterPro" id="IPR002423">
    <property type="entry name" value="Cpn60/GroEL/TCP-1"/>
</dbReference>
<dbReference type="InterPro" id="IPR027409">
    <property type="entry name" value="GroEL-like_apical_dom_sf"/>
</dbReference>
<dbReference type="InterPro" id="IPR027413">
    <property type="entry name" value="GROEL-like_equatorial_sf"/>
</dbReference>
<dbReference type="InterPro" id="IPR027410">
    <property type="entry name" value="TCP-1-like_intermed_sf"/>
</dbReference>
<dbReference type="NCBIfam" id="TIGR02348">
    <property type="entry name" value="GroEL"/>
    <property type="match status" value="1"/>
</dbReference>
<dbReference type="NCBIfam" id="NF000592">
    <property type="entry name" value="PRK00013.1"/>
    <property type="match status" value="1"/>
</dbReference>
<dbReference type="NCBIfam" id="NF009487">
    <property type="entry name" value="PRK12849.1"/>
    <property type="match status" value="1"/>
</dbReference>
<dbReference type="NCBIfam" id="NF009488">
    <property type="entry name" value="PRK12850.1"/>
    <property type="match status" value="1"/>
</dbReference>
<dbReference type="NCBIfam" id="NF009489">
    <property type="entry name" value="PRK12851.1"/>
    <property type="match status" value="1"/>
</dbReference>
<dbReference type="PANTHER" id="PTHR45633">
    <property type="entry name" value="60 KDA HEAT SHOCK PROTEIN, MITOCHONDRIAL"/>
    <property type="match status" value="1"/>
</dbReference>
<dbReference type="Pfam" id="PF00118">
    <property type="entry name" value="Cpn60_TCP1"/>
    <property type="match status" value="1"/>
</dbReference>
<dbReference type="PRINTS" id="PR00298">
    <property type="entry name" value="CHAPERONIN60"/>
</dbReference>
<dbReference type="SUPFAM" id="SSF52029">
    <property type="entry name" value="GroEL apical domain-like"/>
    <property type="match status" value="1"/>
</dbReference>
<dbReference type="SUPFAM" id="SSF48592">
    <property type="entry name" value="GroEL equatorial domain-like"/>
    <property type="match status" value="1"/>
</dbReference>
<dbReference type="SUPFAM" id="SSF54849">
    <property type="entry name" value="GroEL-intermediate domain like"/>
    <property type="match status" value="1"/>
</dbReference>
<dbReference type="PROSITE" id="PS00296">
    <property type="entry name" value="CHAPERONINS_CPN60"/>
    <property type="match status" value="1"/>
</dbReference>
<reference key="1">
    <citation type="submission" date="2000-07" db="EMBL/GenBank/DDBJ databases">
        <title>Molecular cloning and sequencing of chaperonin from Paracoccus denitrificans.</title>
        <authorList>
            <person name="Yohda M."/>
            <person name="Sumi M."/>
            <person name="Yoshida M."/>
            <person name="Fukami T.A."/>
            <person name="Miki K."/>
        </authorList>
    </citation>
    <scope>NUCLEOTIDE SEQUENCE [GENOMIC DNA]</scope>
</reference>
<reference key="2">
    <citation type="journal article" date="2001" name="J. Mol. Biol.">
        <title>Crystal structure of chaperonin-60 from Paracoccus denitrificans.</title>
        <authorList>
            <person name="Fukami T.A."/>
            <person name="Yohda M."/>
            <person name="Taguchi H."/>
            <person name="Yoshida M."/>
            <person name="Miki K."/>
        </authorList>
    </citation>
    <scope>X-RAY CRYSTALLOGRAPHY (3.2 ANGSTROMS)</scope>
    <scope>SUBUNIT</scope>
</reference>
<protein>
    <recommendedName>
        <fullName evidence="1">Chaperonin GroEL</fullName>
        <ecNumber evidence="1">5.6.1.7</ecNumber>
    </recommendedName>
    <alternativeName>
        <fullName evidence="1">60 kDa chaperonin</fullName>
    </alternativeName>
    <alternativeName>
        <fullName evidence="1">Chaperonin-60</fullName>
        <shortName evidence="1">Cpn60</shortName>
    </alternativeName>
</protein>
<sequence>MAAKEVKFNSDARDRMLKGVNILADAVKVTLGPKGRNVVIDKSFGAPRITKDGVSVAKEIELSDKFENMGAQMVREVASRTNDEAGDGTTTATVLAQAIVREGLKAVAAGMNPMDLKRGIDVATAKVVEAIKSAARPVNDSSEVAQVGTISANGESFIGQQIAEAMQRVGNEGVITVEENKGMETEVEVVEGMQFDRGYLSPYFVTNADKMIAELEDAYILLHEKKLSSLQPMVPLLESVIQSQKPLLIVAEDVEGEALATLVVNKLRGGLKIAAVKAPGFGDRRKAMLQDIAILTGGQVISEDLGMKLENVTIDMLGRAKKVSINKDNTTIVDGAGEKAEIEARVSQIRQQIEETTSDYDREKLQERVAKLAGGVAVIRVGGMTEIEVKERKDRVDDALNATRAAVQEGIVVGGGVALVQGAKVLEGLSGANSDQDAGIAIIRRALEAPMRQIAENAGVDGAVVAGKVRESSDKAFGFNAQTEEYGDMFKFGVIDPAKVVRTALEDAASVAGLLITTEAMIAEKPEPKAPAGGMPDMGGMGGMM</sequence>
<accession>Q9Z462</accession>
<comment type="function">
    <text evidence="1">Together with its co-chaperonin GroES, plays an essential role in assisting protein folding. The GroEL-GroES system forms a nano-cage that allows encapsulation of the non-native substrate proteins and provides a physical environment optimized to promote and accelerate protein folding.</text>
</comment>
<comment type="catalytic activity">
    <reaction evidence="1">
        <text>ATP + H2O + a folded polypeptide = ADP + phosphate + an unfolded polypeptide.</text>
        <dbReference type="EC" id="5.6.1.7"/>
    </reaction>
</comment>
<comment type="subunit">
    <text evidence="1 3">Forms a cylinder of 14 subunits composed of two heptameric rings stacked back-to-back. Interacts with the co-chaperonin GroES.</text>
</comment>
<comment type="subcellular location">
    <subcellularLocation>
        <location evidence="1">Cytoplasm</location>
    </subcellularLocation>
</comment>
<comment type="similarity">
    <text evidence="1">Belongs to the chaperonin (HSP60) family.</text>
</comment>
<feature type="chain" id="PRO_0000063469" description="Chaperonin GroEL">
    <location>
        <begin position="1"/>
        <end position="545"/>
    </location>
</feature>
<feature type="region of interest" description="Disordered" evidence="2">
    <location>
        <begin position="526"/>
        <end position="545"/>
    </location>
</feature>
<feature type="compositionally biased region" description="Gly residues" evidence="2">
    <location>
        <begin position="536"/>
        <end position="545"/>
    </location>
</feature>
<feature type="binding site" evidence="1">
    <location>
        <begin position="30"/>
        <end position="33"/>
    </location>
    <ligand>
        <name>ATP</name>
        <dbReference type="ChEBI" id="CHEBI:30616"/>
    </ligand>
</feature>
<feature type="binding site" evidence="1">
    <location>
        <position position="51"/>
    </location>
    <ligand>
        <name>ATP</name>
        <dbReference type="ChEBI" id="CHEBI:30616"/>
    </ligand>
</feature>
<feature type="binding site" evidence="1">
    <location>
        <begin position="87"/>
        <end position="91"/>
    </location>
    <ligand>
        <name>ATP</name>
        <dbReference type="ChEBI" id="CHEBI:30616"/>
    </ligand>
</feature>
<feature type="binding site" evidence="1">
    <location>
        <position position="415"/>
    </location>
    <ligand>
        <name>ATP</name>
        <dbReference type="ChEBI" id="CHEBI:30616"/>
    </ligand>
</feature>
<feature type="binding site" evidence="1">
    <location>
        <position position="496"/>
    </location>
    <ligand>
        <name>ATP</name>
        <dbReference type="ChEBI" id="CHEBI:30616"/>
    </ligand>
</feature>
<feature type="strand" evidence="4">
    <location>
        <begin position="4"/>
        <end position="8"/>
    </location>
</feature>
<feature type="helix" evidence="4">
    <location>
        <begin position="9"/>
        <end position="27"/>
    </location>
</feature>
<feature type="helix" evidence="4">
    <location>
        <begin position="28"/>
        <end position="30"/>
    </location>
</feature>
<feature type="strand" evidence="4">
    <location>
        <begin position="37"/>
        <end position="40"/>
    </location>
</feature>
<feature type="strand" evidence="4">
    <location>
        <begin position="43"/>
        <end position="46"/>
    </location>
</feature>
<feature type="strand" evidence="4">
    <location>
        <begin position="48"/>
        <end position="50"/>
    </location>
</feature>
<feature type="helix" evidence="4">
    <location>
        <begin position="53"/>
        <end position="59"/>
    </location>
</feature>
<feature type="helix" evidence="4">
    <location>
        <begin position="65"/>
        <end position="80"/>
    </location>
</feature>
<feature type="helix" evidence="4">
    <location>
        <begin position="81"/>
        <end position="84"/>
    </location>
</feature>
<feature type="helix" evidence="4">
    <location>
        <begin position="88"/>
        <end position="108"/>
    </location>
</feature>
<feature type="helix" evidence="4">
    <location>
        <begin position="113"/>
        <end position="132"/>
    </location>
</feature>
<feature type="turn" evidence="4">
    <location>
        <begin position="141"/>
        <end position="145"/>
    </location>
</feature>
<feature type="helix" evidence="4">
    <location>
        <begin position="146"/>
        <end position="150"/>
    </location>
</feature>
<feature type="turn" evidence="4">
    <location>
        <begin position="151"/>
        <end position="154"/>
    </location>
</feature>
<feature type="helix" evidence="4">
    <location>
        <begin position="156"/>
        <end position="169"/>
    </location>
</feature>
<feature type="strand" evidence="4">
    <location>
        <begin position="181"/>
        <end position="183"/>
    </location>
</feature>
<feature type="strand" evidence="4">
    <location>
        <begin position="186"/>
        <end position="190"/>
    </location>
</feature>
<feature type="helix" evidence="4">
    <location>
        <begin position="202"/>
        <end position="204"/>
    </location>
</feature>
<feature type="strand" evidence="4">
    <location>
        <begin position="208"/>
        <end position="211"/>
    </location>
</feature>
<feature type="strand" evidence="4">
    <location>
        <begin position="213"/>
        <end position="222"/>
    </location>
</feature>
<feature type="strand" evidence="4">
    <location>
        <begin position="248"/>
        <end position="252"/>
    </location>
</feature>
<feature type="strand" evidence="4">
    <location>
        <begin position="274"/>
        <end position="277"/>
    </location>
</feature>
<feature type="helix" evidence="4">
    <location>
        <begin position="284"/>
        <end position="296"/>
    </location>
</feature>
<feature type="strand" evidence="4">
    <location>
        <begin position="317"/>
        <end position="325"/>
    </location>
</feature>
<feature type="strand" evidence="4">
    <location>
        <begin position="330"/>
        <end position="334"/>
    </location>
</feature>
<feature type="helix" evidence="4">
    <location>
        <begin position="339"/>
        <end position="353"/>
    </location>
</feature>
<feature type="helix" evidence="4">
    <location>
        <begin position="361"/>
        <end position="370"/>
    </location>
</feature>
<feature type="strand" evidence="4">
    <location>
        <begin position="376"/>
        <end position="381"/>
    </location>
</feature>
<feature type="helix" evidence="4">
    <location>
        <begin position="386"/>
        <end position="409"/>
    </location>
</feature>
<feature type="strand" evidence="4">
    <location>
        <begin position="411"/>
        <end position="413"/>
    </location>
</feature>
<feature type="turn" evidence="4">
    <location>
        <begin position="414"/>
        <end position="416"/>
    </location>
</feature>
<feature type="helix" evidence="4">
    <location>
        <begin position="417"/>
        <end position="422"/>
    </location>
</feature>
<feature type="helix" evidence="4">
    <location>
        <begin position="423"/>
        <end position="427"/>
    </location>
</feature>
<feature type="helix" evidence="4">
    <location>
        <begin position="434"/>
        <end position="446"/>
    </location>
</feature>
<feature type="helix" evidence="4">
    <location>
        <begin position="449"/>
        <end position="458"/>
    </location>
</feature>
<feature type="helix" evidence="4">
    <location>
        <begin position="462"/>
        <end position="470"/>
    </location>
</feature>
<feature type="strand" evidence="4">
    <location>
        <begin position="477"/>
        <end position="480"/>
    </location>
</feature>
<feature type="turn" evidence="4">
    <location>
        <begin position="481"/>
        <end position="484"/>
    </location>
</feature>
<feature type="strand" evidence="4">
    <location>
        <begin position="485"/>
        <end position="488"/>
    </location>
</feature>
<feature type="helix" evidence="4">
    <location>
        <begin position="489"/>
        <end position="492"/>
    </location>
</feature>
<feature type="strand" evidence="4">
    <location>
        <begin position="495"/>
        <end position="497"/>
    </location>
</feature>
<feature type="helix" evidence="4">
    <location>
        <begin position="498"/>
        <end position="516"/>
    </location>
</feature>
<feature type="strand" evidence="4">
    <location>
        <begin position="518"/>
        <end position="524"/>
    </location>
</feature>
<keyword id="KW-0002">3D-structure</keyword>
<keyword id="KW-0067">ATP-binding</keyword>
<keyword id="KW-0143">Chaperone</keyword>
<keyword id="KW-0963">Cytoplasm</keyword>
<keyword id="KW-0413">Isomerase</keyword>
<keyword id="KW-0547">Nucleotide-binding</keyword>
<organism>
    <name type="scientific">Paracoccus denitrificans</name>
    <dbReference type="NCBI Taxonomy" id="266"/>
    <lineage>
        <taxon>Bacteria</taxon>
        <taxon>Pseudomonadati</taxon>
        <taxon>Pseudomonadota</taxon>
        <taxon>Alphaproteobacteria</taxon>
        <taxon>Rhodobacterales</taxon>
        <taxon>Paracoccaceae</taxon>
        <taxon>Paracoccus</taxon>
    </lineage>
</organism>